<evidence type="ECO:0000255" key="1">
    <source>
        <dbReference type="HAMAP-Rule" id="MF_01270"/>
    </source>
</evidence>
<accession>Q8P473</accession>
<reference key="1">
    <citation type="journal article" date="2002" name="Nature">
        <title>Comparison of the genomes of two Xanthomonas pathogens with differing host specificities.</title>
        <authorList>
            <person name="da Silva A.C.R."/>
            <person name="Ferro J.A."/>
            <person name="Reinach F.C."/>
            <person name="Farah C.S."/>
            <person name="Furlan L.R."/>
            <person name="Quaggio R.B."/>
            <person name="Monteiro-Vitorello C.B."/>
            <person name="Van Sluys M.A."/>
            <person name="Almeida N.F. Jr."/>
            <person name="Alves L.M.C."/>
            <person name="do Amaral A.M."/>
            <person name="Bertolini M.C."/>
            <person name="Camargo L.E.A."/>
            <person name="Camarotte G."/>
            <person name="Cannavan F."/>
            <person name="Cardozo J."/>
            <person name="Chambergo F."/>
            <person name="Ciapina L.P."/>
            <person name="Cicarelli R.M.B."/>
            <person name="Coutinho L.L."/>
            <person name="Cursino-Santos J.R."/>
            <person name="El-Dorry H."/>
            <person name="Faria J.B."/>
            <person name="Ferreira A.J.S."/>
            <person name="Ferreira R.C.C."/>
            <person name="Ferro M.I.T."/>
            <person name="Formighieri E.F."/>
            <person name="Franco M.C."/>
            <person name="Greggio C.C."/>
            <person name="Gruber A."/>
            <person name="Katsuyama A.M."/>
            <person name="Kishi L.T."/>
            <person name="Leite R.P."/>
            <person name="Lemos E.G.M."/>
            <person name="Lemos M.V.F."/>
            <person name="Locali E.C."/>
            <person name="Machado M.A."/>
            <person name="Madeira A.M.B.N."/>
            <person name="Martinez-Rossi N.M."/>
            <person name="Martins E.C."/>
            <person name="Meidanis J."/>
            <person name="Menck C.F.M."/>
            <person name="Miyaki C.Y."/>
            <person name="Moon D.H."/>
            <person name="Moreira L.M."/>
            <person name="Novo M.T.M."/>
            <person name="Okura V.K."/>
            <person name="Oliveira M.C."/>
            <person name="Oliveira V.R."/>
            <person name="Pereira H.A."/>
            <person name="Rossi A."/>
            <person name="Sena J.A.D."/>
            <person name="Silva C."/>
            <person name="de Souza R.F."/>
            <person name="Spinola L.A.F."/>
            <person name="Takita M.A."/>
            <person name="Tamura R.E."/>
            <person name="Teixeira E.C."/>
            <person name="Tezza R.I.D."/>
            <person name="Trindade dos Santos M."/>
            <person name="Truffi D."/>
            <person name="Tsai S.M."/>
            <person name="White F.F."/>
            <person name="Setubal J.C."/>
            <person name="Kitajima J.P."/>
        </authorList>
    </citation>
    <scope>NUCLEOTIDE SEQUENCE [LARGE SCALE GENOMIC DNA]</scope>
    <source>
        <strain>ATCC 33913 / DSM 3586 / NCPPB 528 / LMG 568 / P 25</strain>
    </source>
</reference>
<gene>
    <name evidence="1" type="primary">anmK</name>
    <name type="ordered locus">XCC3843</name>
</gene>
<organism>
    <name type="scientific">Xanthomonas campestris pv. campestris (strain ATCC 33913 / DSM 3586 / NCPPB 528 / LMG 568 / P 25)</name>
    <dbReference type="NCBI Taxonomy" id="190485"/>
    <lineage>
        <taxon>Bacteria</taxon>
        <taxon>Pseudomonadati</taxon>
        <taxon>Pseudomonadota</taxon>
        <taxon>Gammaproteobacteria</taxon>
        <taxon>Lysobacterales</taxon>
        <taxon>Lysobacteraceae</taxon>
        <taxon>Xanthomonas</taxon>
    </lineage>
</organism>
<name>ANMK_XANCP</name>
<proteinExistence type="inferred from homology"/>
<dbReference type="EC" id="2.7.1.170" evidence="1"/>
<dbReference type="EMBL" id="AE008922">
    <property type="protein sequence ID" value="AAM43074.1"/>
    <property type="molecule type" value="Genomic_DNA"/>
</dbReference>
<dbReference type="RefSeq" id="NP_639183.1">
    <property type="nucleotide sequence ID" value="NC_003902.1"/>
</dbReference>
<dbReference type="RefSeq" id="WP_011038918.1">
    <property type="nucleotide sequence ID" value="NC_003902.1"/>
</dbReference>
<dbReference type="SMR" id="Q8P473"/>
<dbReference type="STRING" id="190485.XCC3843"/>
<dbReference type="EnsemblBacteria" id="AAM43074">
    <property type="protein sequence ID" value="AAM43074"/>
    <property type="gene ID" value="XCC3843"/>
</dbReference>
<dbReference type="KEGG" id="xcc:XCC3843"/>
<dbReference type="PATRIC" id="fig|190485.4.peg.4110"/>
<dbReference type="eggNOG" id="COG2377">
    <property type="taxonomic scope" value="Bacteria"/>
</dbReference>
<dbReference type="HOGENOM" id="CLU_038782_0_0_6"/>
<dbReference type="OrthoDB" id="9763949at2"/>
<dbReference type="UniPathway" id="UPA00343"/>
<dbReference type="UniPathway" id="UPA00544"/>
<dbReference type="Proteomes" id="UP000001010">
    <property type="component" value="Chromosome"/>
</dbReference>
<dbReference type="GO" id="GO:0005524">
    <property type="term" value="F:ATP binding"/>
    <property type="evidence" value="ECO:0007669"/>
    <property type="project" value="UniProtKB-UniRule"/>
</dbReference>
<dbReference type="GO" id="GO:0016301">
    <property type="term" value="F:kinase activity"/>
    <property type="evidence" value="ECO:0000318"/>
    <property type="project" value="GO_Central"/>
</dbReference>
<dbReference type="GO" id="GO:0016773">
    <property type="term" value="F:phosphotransferase activity, alcohol group as acceptor"/>
    <property type="evidence" value="ECO:0007669"/>
    <property type="project" value="UniProtKB-UniRule"/>
</dbReference>
<dbReference type="GO" id="GO:0097175">
    <property type="term" value="P:1,6-anhydro-N-acetyl-beta-muramic acid catabolic process"/>
    <property type="evidence" value="ECO:0007669"/>
    <property type="project" value="UniProtKB-UniRule"/>
</dbReference>
<dbReference type="GO" id="GO:0006040">
    <property type="term" value="P:amino sugar metabolic process"/>
    <property type="evidence" value="ECO:0007669"/>
    <property type="project" value="InterPro"/>
</dbReference>
<dbReference type="GO" id="GO:0009254">
    <property type="term" value="P:peptidoglycan turnover"/>
    <property type="evidence" value="ECO:0007669"/>
    <property type="project" value="UniProtKB-UniRule"/>
</dbReference>
<dbReference type="CDD" id="cd24050">
    <property type="entry name" value="ASKHA_NBD_ANMK"/>
    <property type="match status" value="1"/>
</dbReference>
<dbReference type="Gene3D" id="3.30.420.40">
    <property type="match status" value="2"/>
</dbReference>
<dbReference type="HAMAP" id="MF_01270">
    <property type="entry name" value="AnhMurNAc_kinase"/>
    <property type="match status" value="1"/>
</dbReference>
<dbReference type="InterPro" id="IPR005338">
    <property type="entry name" value="Anhydro_N_Ac-Mur_kinase"/>
</dbReference>
<dbReference type="InterPro" id="IPR043129">
    <property type="entry name" value="ATPase_NBD"/>
</dbReference>
<dbReference type="NCBIfam" id="NF007139">
    <property type="entry name" value="PRK09585.1-3"/>
    <property type="match status" value="1"/>
</dbReference>
<dbReference type="NCBIfam" id="NF007148">
    <property type="entry name" value="PRK09585.3-2"/>
    <property type="match status" value="1"/>
</dbReference>
<dbReference type="PANTHER" id="PTHR30605">
    <property type="entry name" value="ANHYDRO-N-ACETYLMURAMIC ACID KINASE"/>
    <property type="match status" value="1"/>
</dbReference>
<dbReference type="PANTHER" id="PTHR30605:SF0">
    <property type="entry name" value="ANHYDRO-N-ACETYLMURAMIC ACID KINASE"/>
    <property type="match status" value="1"/>
</dbReference>
<dbReference type="Pfam" id="PF03702">
    <property type="entry name" value="AnmK"/>
    <property type="match status" value="1"/>
</dbReference>
<dbReference type="SUPFAM" id="SSF53067">
    <property type="entry name" value="Actin-like ATPase domain"/>
    <property type="match status" value="1"/>
</dbReference>
<comment type="function">
    <text evidence="1">Catalyzes the specific phosphorylation of 1,6-anhydro-N-acetylmuramic acid (anhMurNAc) with the simultaneous cleavage of the 1,6-anhydro ring, generating MurNAc-6-P. Is required for the utilization of anhMurNAc either imported from the medium or derived from its own cell wall murein, and thus plays a role in cell wall recycling.</text>
</comment>
<comment type="catalytic activity">
    <reaction evidence="1">
        <text>1,6-anhydro-N-acetyl-beta-muramate + ATP + H2O = N-acetyl-D-muramate 6-phosphate + ADP + H(+)</text>
        <dbReference type="Rhea" id="RHEA:24952"/>
        <dbReference type="ChEBI" id="CHEBI:15377"/>
        <dbReference type="ChEBI" id="CHEBI:15378"/>
        <dbReference type="ChEBI" id="CHEBI:30616"/>
        <dbReference type="ChEBI" id="CHEBI:58690"/>
        <dbReference type="ChEBI" id="CHEBI:58722"/>
        <dbReference type="ChEBI" id="CHEBI:456216"/>
        <dbReference type="EC" id="2.7.1.170"/>
    </reaction>
</comment>
<comment type="pathway">
    <text evidence="1">Amino-sugar metabolism; 1,6-anhydro-N-acetylmuramate degradation.</text>
</comment>
<comment type="pathway">
    <text evidence="1">Cell wall biogenesis; peptidoglycan recycling.</text>
</comment>
<comment type="similarity">
    <text evidence="1">Belongs to the anhydro-N-acetylmuramic acid kinase family.</text>
</comment>
<protein>
    <recommendedName>
        <fullName evidence="1">Anhydro-N-acetylmuramic acid kinase</fullName>
        <ecNumber evidence="1">2.7.1.170</ecNumber>
    </recommendedName>
    <alternativeName>
        <fullName evidence="1">AnhMurNAc kinase</fullName>
    </alternativeName>
</protein>
<sequence length="377" mass="39442">MSAPTHTHSPLYLGLMSGTSADGIDAALVRFDDASHRRCELVAGITVGWEPQLREALVALGQGAEQMAIDRLGRLDAQVGLAFADAANQLIAEAGVAREQIRAIGSHGQTIRHRPQADPAFTWQIGDASRIAEHTGITTAADFRRRDVAAGGQGAPLMPAFHLAMLGASDEDRAVLNLGGIGNLTLIPRDGAVLGFDTGPANALLDSWCQQHRGTPFDADGAFAASGKVDAALLHALLADPWFALPPPKSTGREQFHLAWALQAMGTATLRPADVQATLLELTAATVADALLRHQPTTRRVLVCGGGVRNPVLLARLAARLPGVVVESSARHGLDPDYLEAMGFAWLAAELLAGRPANLPSVTGAAGPRLLGAIYPA</sequence>
<feature type="chain" id="PRO_0000250084" description="Anhydro-N-acetylmuramic acid kinase">
    <location>
        <begin position="1"/>
        <end position="377"/>
    </location>
</feature>
<feature type="binding site" evidence="1">
    <location>
        <begin position="18"/>
        <end position="25"/>
    </location>
    <ligand>
        <name>ATP</name>
        <dbReference type="ChEBI" id="CHEBI:30616"/>
    </ligand>
</feature>
<keyword id="KW-0067">ATP-binding</keyword>
<keyword id="KW-0119">Carbohydrate metabolism</keyword>
<keyword id="KW-0418">Kinase</keyword>
<keyword id="KW-0547">Nucleotide-binding</keyword>
<keyword id="KW-1185">Reference proteome</keyword>
<keyword id="KW-0808">Transferase</keyword>